<organism>
    <name type="scientific">Ureaplasma parvum serovar 3 (strain ATCC 700970)</name>
    <dbReference type="NCBI Taxonomy" id="273119"/>
    <lineage>
        <taxon>Bacteria</taxon>
        <taxon>Bacillati</taxon>
        <taxon>Mycoplasmatota</taxon>
        <taxon>Mycoplasmoidales</taxon>
        <taxon>Mycoplasmoidaceae</taxon>
        <taxon>Ureaplasma</taxon>
    </lineage>
</organism>
<accession>Q9PQ85</accession>
<comment type="function">
    <text evidence="1">Catalyzes the transfer of an acyl group from acyl-phosphate (acyl-PO(4)) to glycerol-3-phosphate (G3P) to form lysophosphatidic acid (LPA). This enzyme utilizes acyl-phosphate as fatty acyl donor, but not acyl-CoA or acyl-ACP.</text>
</comment>
<comment type="catalytic activity">
    <reaction evidence="1">
        <text>an acyl phosphate + sn-glycerol 3-phosphate = a 1-acyl-sn-glycero-3-phosphate + phosphate</text>
        <dbReference type="Rhea" id="RHEA:34075"/>
        <dbReference type="ChEBI" id="CHEBI:43474"/>
        <dbReference type="ChEBI" id="CHEBI:57597"/>
        <dbReference type="ChEBI" id="CHEBI:57970"/>
        <dbReference type="ChEBI" id="CHEBI:59918"/>
        <dbReference type="EC" id="2.3.1.275"/>
    </reaction>
</comment>
<comment type="pathway">
    <text evidence="1">Lipid metabolism; phospholipid metabolism.</text>
</comment>
<comment type="subunit">
    <text evidence="1">Probably interacts with PlsX.</text>
</comment>
<comment type="subcellular location">
    <subcellularLocation>
        <location evidence="1">Cell membrane</location>
        <topology evidence="1">Multi-pass membrane protein</topology>
    </subcellularLocation>
</comment>
<comment type="similarity">
    <text evidence="1">Belongs to the PlsY family.</text>
</comment>
<name>PLSY_UREPA</name>
<evidence type="ECO:0000255" key="1">
    <source>
        <dbReference type="HAMAP-Rule" id="MF_01043"/>
    </source>
</evidence>
<feature type="chain" id="PRO_0000188484" description="Glycerol-3-phosphate acyltransferase">
    <location>
        <begin position="1"/>
        <end position="257"/>
    </location>
</feature>
<feature type="transmembrane region" description="Helical" evidence="1">
    <location>
        <begin position="7"/>
        <end position="27"/>
    </location>
</feature>
<feature type="transmembrane region" description="Helical" evidence="1">
    <location>
        <begin position="66"/>
        <end position="86"/>
    </location>
</feature>
<feature type="transmembrane region" description="Helical" evidence="1">
    <location>
        <begin position="104"/>
        <end position="124"/>
    </location>
</feature>
<feature type="transmembrane region" description="Helical" evidence="1">
    <location>
        <begin position="140"/>
        <end position="160"/>
    </location>
</feature>
<feature type="transmembrane region" description="Helical" evidence="1">
    <location>
        <begin position="164"/>
        <end position="184"/>
    </location>
</feature>
<feature type="transmembrane region" description="Helical" evidence="1">
    <location>
        <begin position="203"/>
        <end position="223"/>
    </location>
</feature>
<sequence>MDQVYNIVMAYILTLIISPLYSYLIGSLNASIILSLVFKKQDVRLFASKNAGMTNMIRVHGKKLGILTLFLDIIKPITTVSLTYIIYKYALDAPFDLSNGFNQAILVYFGGIFTIIGHCYPIFFKFQGGKGVACYGGFLITVDPIVALIGIITLLVILLITKYMSLSAMITATFTCFLVLVPGINYIPYYNQNFTTYFFDLNYVIKGIWYVWFFLLVSASLLIYRHKTNILSIATKQERKTILFHTKSKDNLSDVNK</sequence>
<protein>
    <recommendedName>
        <fullName evidence="1">Glycerol-3-phosphate acyltransferase</fullName>
    </recommendedName>
    <alternativeName>
        <fullName evidence="1">Acyl-PO4 G3P acyltransferase</fullName>
    </alternativeName>
    <alternativeName>
        <fullName evidence="1">Acyl-phosphate--glycerol-3-phosphate acyltransferase</fullName>
    </alternativeName>
    <alternativeName>
        <fullName evidence="1">G3P acyltransferase</fullName>
        <shortName evidence="1">GPAT</shortName>
        <ecNumber evidence="1">2.3.1.275</ecNumber>
    </alternativeName>
    <alternativeName>
        <fullName evidence="1">Lysophosphatidic acid synthase</fullName>
        <shortName evidence="1">LPA synthase</shortName>
    </alternativeName>
</protein>
<dbReference type="EC" id="2.3.1.275" evidence="1"/>
<dbReference type="EMBL" id="AF222894">
    <property type="protein sequence ID" value="AAF30815.1"/>
    <property type="molecule type" value="Genomic_DNA"/>
</dbReference>
<dbReference type="RefSeq" id="WP_006688736.1">
    <property type="nucleotide sequence ID" value="NC_002162.1"/>
</dbReference>
<dbReference type="SMR" id="Q9PQ85"/>
<dbReference type="STRING" id="273119.UU405"/>
<dbReference type="EnsemblBacteria" id="AAF30815">
    <property type="protein sequence ID" value="AAF30815"/>
    <property type="gene ID" value="UU405"/>
</dbReference>
<dbReference type="GeneID" id="29672333"/>
<dbReference type="KEGG" id="uur:UU405"/>
<dbReference type="eggNOG" id="COG0344">
    <property type="taxonomic scope" value="Bacteria"/>
</dbReference>
<dbReference type="HOGENOM" id="CLU_081254_3_0_14"/>
<dbReference type="OrthoDB" id="9777124at2"/>
<dbReference type="UniPathway" id="UPA00085"/>
<dbReference type="Proteomes" id="UP000000423">
    <property type="component" value="Chromosome"/>
</dbReference>
<dbReference type="GO" id="GO:0005886">
    <property type="term" value="C:plasma membrane"/>
    <property type="evidence" value="ECO:0007669"/>
    <property type="project" value="UniProtKB-SubCell"/>
</dbReference>
<dbReference type="GO" id="GO:0043772">
    <property type="term" value="F:acyl-phosphate glycerol-3-phosphate acyltransferase activity"/>
    <property type="evidence" value="ECO:0007669"/>
    <property type="project" value="UniProtKB-UniRule"/>
</dbReference>
<dbReference type="GO" id="GO:0008654">
    <property type="term" value="P:phospholipid biosynthetic process"/>
    <property type="evidence" value="ECO:0007669"/>
    <property type="project" value="UniProtKB-UniRule"/>
</dbReference>
<dbReference type="HAMAP" id="MF_01043">
    <property type="entry name" value="PlsY"/>
    <property type="match status" value="1"/>
</dbReference>
<dbReference type="InterPro" id="IPR003811">
    <property type="entry name" value="G3P_acylTferase_PlsY"/>
</dbReference>
<dbReference type="NCBIfam" id="TIGR00023">
    <property type="entry name" value="glycerol-3-phosphate 1-O-acyltransferase PlsY"/>
    <property type="match status" value="1"/>
</dbReference>
<dbReference type="PANTHER" id="PTHR30309:SF0">
    <property type="entry name" value="GLYCEROL-3-PHOSPHATE ACYLTRANSFERASE-RELATED"/>
    <property type="match status" value="1"/>
</dbReference>
<dbReference type="PANTHER" id="PTHR30309">
    <property type="entry name" value="INNER MEMBRANE PROTEIN YGIH"/>
    <property type="match status" value="1"/>
</dbReference>
<dbReference type="Pfam" id="PF02660">
    <property type="entry name" value="G3P_acyltransf"/>
    <property type="match status" value="1"/>
</dbReference>
<dbReference type="SMART" id="SM01207">
    <property type="entry name" value="G3P_acyltransf"/>
    <property type="match status" value="1"/>
</dbReference>
<keyword id="KW-1003">Cell membrane</keyword>
<keyword id="KW-0444">Lipid biosynthesis</keyword>
<keyword id="KW-0443">Lipid metabolism</keyword>
<keyword id="KW-0472">Membrane</keyword>
<keyword id="KW-0594">Phospholipid biosynthesis</keyword>
<keyword id="KW-1208">Phospholipid metabolism</keyword>
<keyword id="KW-1185">Reference proteome</keyword>
<keyword id="KW-0808">Transferase</keyword>
<keyword id="KW-0812">Transmembrane</keyword>
<keyword id="KW-1133">Transmembrane helix</keyword>
<reference key="1">
    <citation type="journal article" date="2000" name="Nature">
        <title>The complete sequence of the mucosal pathogen Ureaplasma urealyticum.</title>
        <authorList>
            <person name="Glass J.I."/>
            <person name="Lefkowitz E.J."/>
            <person name="Glass J.S."/>
            <person name="Heiner C.R."/>
            <person name="Chen E.Y."/>
            <person name="Cassell G.H."/>
        </authorList>
    </citation>
    <scope>NUCLEOTIDE SEQUENCE [LARGE SCALE GENOMIC DNA]</scope>
    <source>
        <strain>ATCC 700970</strain>
    </source>
</reference>
<gene>
    <name evidence="1" type="primary">plsY</name>
    <name type="ordered locus">UU405</name>
</gene>
<proteinExistence type="inferred from homology"/>